<organism>
    <name type="scientific">Rickettsia bellii (strain RML369-C)</name>
    <dbReference type="NCBI Taxonomy" id="336407"/>
    <lineage>
        <taxon>Bacteria</taxon>
        <taxon>Pseudomonadati</taxon>
        <taxon>Pseudomonadota</taxon>
        <taxon>Alphaproteobacteria</taxon>
        <taxon>Rickettsiales</taxon>
        <taxon>Rickettsiaceae</taxon>
        <taxon>Rickettsieae</taxon>
        <taxon>Rickettsia</taxon>
        <taxon>belli group</taxon>
    </lineage>
</organism>
<proteinExistence type="inferred from homology"/>
<protein>
    <recommendedName>
        <fullName evidence="1">Small ribosomal subunit protein uS8</fullName>
    </recommendedName>
    <alternativeName>
        <fullName evidence="2">30S ribosomal protein S8</fullName>
    </alternativeName>
</protein>
<evidence type="ECO:0000255" key="1">
    <source>
        <dbReference type="HAMAP-Rule" id="MF_01302"/>
    </source>
</evidence>
<evidence type="ECO:0000305" key="2"/>
<dbReference type="EMBL" id="CP000087">
    <property type="protein sequence ID" value="ABE05129.1"/>
    <property type="molecule type" value="Genomic_DNA"/>
</dbReference>
<dbReference type="RefSeq" id="WP_011477707.1">
    <property type="nucleotide sequence ID" value="NC_007940.1"/>
</dbReference>
<dbReference type="SMR" id="Q1RHN5"/>
<dbReference type="KEGG" id="rbe:RBE_1048"/>
<dbReference type="eggNOG" id="COG0096">
    <property type="taxonomic scope" value="Bacteria"/>
</dbReference>
<dbReference type="HOGENOM" id="CLU_098428_0_0_5"/>
<dbReference type="OrthoDB" id="9802617at2"/>
<dbReference type="Proteomes" id="UP000001951">
    <property type="component" value="Chromosome"/>
</dbReference>
<dbReference type="GO" id="GO:1990904">
    <property type="term" value="C:ribonucleoprotein complex"/>
    <property type="evidence" value="ECO:0007669"/>
    <property type="project" value="UniProtKB-KW"/>
</dbReference>
<dbReference type="GO" id="GO:0005840">
    <property type="term" value="C:ribosome"/>
    <property type="evidence" value="ECO:0007669"/>
    <property type="project" value="UniProtKB-KW"/>
</dbReference>
<dbReference type="GO" id="GO:0019843">
    <property type="term" value="F:rRNA binding"/>
    <property type="evidence" value="ECO:0007669"/>
    <property type="project" value="UniProtKB-UniRule"/>
</dbReference>
<dbReference type="GO" id="GO:0003735">
    <property type="term" value="F:structural constituent of ribosome"/>
    <property type="evidence" value="ECO:0007669"/>
    <property type="project" value="InterPro"/>
</dbReference>
<dbReference type="GO" id="GO:0006412">
    <property type="term" value="P:translation"/>
    <property type="evidence" value="ECO:0007669"/>
    <property type="project" value="UniProtKB-UniRule"/>
</dbReference>
<dbReference type="FunFam" id="3.30.1370.30:FF:000002">
    <property type="entry name" value="30S ribosomal protein S8"/>
    <property type="match status" value="1"/>
</dbReference>
<dbReference type="FunFam" id="3.30.1490.10:FF:000001">
    <property type="entry name" value="30S ribosomal protein S8"/>
    <property type="match status" value="1"/>
</dbReference>
<dbReference type="Gene3D" id="3.30.1370.30">
    <property type="match status" value="1"/>
</dbReference>
<dbReference type="Gene3D" id="3.30.1490.10">
    <property type="match status" value="1"/>
</dbReference>
<dbReference type="HAMAP" id="MF_01302_B">
    <property type="entry name" value="Ribosomal_uS8_B"/>
    <property type="match status" value="1"/>
</dbReference>
<dbReference type="InterPro" id="IPR000630">
    <property type="entry name" value="Ribosomal_uS8"/>
</dbReference>
<dbReference type="InterPro" id="IPR047863">
    <property type="entry name" value="Ribosomal_uS8_CS"/>
</dbReference>
<dbReference type="InterPro" id="IPR035987">
    <property type="entry name" value="Ribosomal_uS8_sf"/>
</dbReference>
<dbReference type="NCBIfam" id="NF001109">
    <property type="entry name" value="PRK00136.1"/>
    <property type="match status" value="1"/>
</dbReference>
<dbReference type="PANTHER" id="PTHR11758">
    <property type="entry name" value="40S RIBOSOMAL PROTEIN S15A"/>
    <property type="match status" value="1"/>
</dbReference>
<dbReference type="Pfam" id="PF00410">
    <property type="entry name" value="Ribosomal_S8"/>
    <property type="match status" value="1"/>
</dbReference>
<dbReference type="SUPFAM" id="SSF56047">
    <property type="entry name" value="Ribosomal protein S8"/>
    <property type="match status" value="1"/>
</dbReference>
<dbReference type="PROSITE" id="PS00053">
    <property type="entry name" value="RIBOSOMAL_S8"/>
    <property type="match status" value="1"/>
</dbReference>
<name>RS8_RICBR</name>
<comment type="function">
    <text evidence="1">One of the primary rRNA binding proteins, it binds directly to 16S rRNA central domain where it helps coordinate assembly of the platform of the 30S subunit.</text>
</comment>
<comment type="subunit">
    <text evidence="1">Part of the 30S ribosomal subunit. Contacts proteins S5 and S12.</text>
</comment>
<comment type="similarity">
    <text evidence="1">Belongs to the universal ribosomal protein uS8 family.</text>
</comment>
<gene>
    <name evidence="1" type="primary">rpsH</name>
    <name type="ordered locus">RBE_1048</name>
</gene>
<sequence length="132" mass="14830">MSMTDNVADMLTRIRNAYKSKLINVSFPSSKIKTSILEVLQKEGYIKNYTSTPKDNISYTEVTLKYSANGDASICEIHRVSKPGKRVYSAIKDLKGYYNNMGIYILSTPYGVMSDREAHIKNVGGEVICKVF</sequence>
<accession>Q1RHN5</accession>
<feature type="chain" id="PRO_0000272390" description="Small ribosomal subunit protein uS8">
    <location>
        <begin position="1"/>
        <end position="132"/>
    </location>
</feature>
<keyword id="KW-0687">Ribonucleoprotein</keyword>
<keyword id="KW-0689">Ribosomal protein</keyword>
<keyword id="KW-0694">RNA-binding</keyword>
<keyword id="KW-0699">rRNA-binding</keyword>
<reference key="1">
    <citation type="journal article" date="2006" name="PLoS Genet.">
        <title>Genome sequence of Rickettsia bellii illuminates the role of amoebae in gene exchanges between intracellular pathogens.</title>
        <authorList>
            <person name="Ogata H."/>
            <person name="La Scola B."/>
            <person name="Audic S."/>
            <person name="Renesto P."/>
            <person name="Blanc G."/>
            <person name="Robert C."/>
            <person name="Fournier P.-E."/>
            <person name="Claverie J.-M."/>
            <person name="Raoult D."/>
        </authorList>
    </citation>
    <scope>NUCLEOTIDE SEQUENCE [LARGE SCALE GENOMIC DNA]</scope>
    <source>
        <strain>RML369-C</strain>
    </source>
</reference>